<proteinExistence type="inferred from homology"/>
<protein>
    <recommendedName>
        <fullName evidence="1">(5-formylfuran-3-yl)methyl phosphate synthase</fullName>
        <ecNumber evidence="1">4.2.3.153</ecNumber>
    </recommendedName>
    <alternativeName>
        <fullName evidence="1">4-(hydroxymethyl)-2-furancarboxaldehyde-phosphate synthase</fullName>
        <shortName evidence="1">4-HFC-P synthase</shortName>
    </alternativeName>
</protein>
<gene>
    <name evidence="1" type="primary">mfnB</name>
    <name type="ordered locus">MTH_141</name>
</gene>
<feature type="chain" id="PRO_0000134868" description="(5-formylfuran-3-yl)methyl phosphate synthase">
    <location>
        <begin position="1"/>
        <end position="236"/>
    </location>
</feature>
<feature type="active site" description="Schiff-base intermediate with substrate" evidence="1">
    <location>
        <position position="27"/>
    </location>
</feature>
<feature type="active site" description="Proton acceptor" evidence="1">
    <location>
        <position position="85"/>
    </location>
</feature>
<dbReference type="EC" id="4.2.3.153" evidence="1"/>
<dbReference type="EMBL" id="AE000666">
    <property type="protein sequence ID" value="AAB84647.1"/>
    <property type="molecule type" value="Genomic_DNA"/>
</dbReference>
<dbReference type="PIR" id="G69054">
    <property type="entry name" value="G69054"/>
</dbReference>
<dbReference type="RefSeq" id="WP_010875780.1">
    <property type="nucleotide sequence ID" value="NC_000916.1"/>
</dbReference>
<dbReference type="SMR" id="O26244"/>
<dbReference type="FunCoup" id="O26244">
    <property type="interactions" value="90"/>
</dbReference>
<dbReference type="STRING" id="187420.MTH_141"/>
<dbReference type="PaxDb" id="187420-MTH_141"/>
<dbReference type="EnsemblBacteria" id="AAB84647">
    <property type="protein sequence ID" value="AAB84647"/>
    <property type="gene ID" value="MTH_141"/>
</dbReference>
<dbReference type="KEGG" id="mth:MTH_141"/>
<dbReference type="PATRIC" id="fig|187420.15.peg.114"/>
<dbReference type="HOGENOM" id="CLU_068659_0_0_2"/>
<dbReference type="InParanoid" id="O26244"/>
<dbReference type="UniPathway" id="UPA00080"/>
<dbReference type="Proteomes" id="UP000005223">
    <property type="component" value="Chromosome"/>
</dbReference>
<dbReference type="GO" id="GO:0016830">
    <property type="term" value="F:carbon-carbon lyase activity"/>
    <property type="evidence" value="ECO:0007669"/>
    <property type="project" value="UniProtKB-UniRule"/>
</dbReference>
<dbReference type="GO" id="GO:2001120">
    <property type="term" value="P:methanofuran biosynthetic process"/>
    <property type="evidence" value="ECO:0007669"/>
    <property type="project" value="UniProtKB-UniRule"/>
</dbReference>
<dbReference type="HAMAP" id="MF_00681">
    <property type="entry name" value="MfnB"/>
    <property type="match status" value="1"/>
</dbReference>
<dbReference type="InterPro" id="IPR007565">
    <property type="entry name" value="4HFCP_synth"/>
</dbReference>
<dbReference type="InterPro" id="IPR035081">
    <property type="entry name" value="4HFCP_synth_arc"/>
</dbReference>
<dbReference type="NCBIfam" id="NF002573">
    <property type="entry name" value="PRK02227.1-1"/>
    <property type="match status" value="1"/>
</dbReference>
<dbReference type="NCBIfam" id="NF002575">
    <property type="entry name" value="PRK02227.1-3"/>
    <property type="match status" value="1"/>
</dbReference>
<dbReference type="Pfam" id="PF04476">
    <property type="entry name" value="4HFCP_synth"/>
    <property type="match status" value="1"/>
</dbReference>
<dbReference type="PIRSF" id="PIRSF015957">
    <property type="entry name" value="UCP015957"/>
    <property type="match status" value="1"/>
</dbReference>
<dbReference type="SUPFAM" id="SSF51569">
    <property type="entry name" value="Aldolase"/>
    <property type="match status" value="1"/>
</dbReference>
<dbReference type="SUPFAM" id="SSF51412">
    <property type="entry name" value="Inosine monophosphate dehydrogenase (IMPDH)"/>
    <property type="match status" value="1"/>
</dbReference>
<reference key="1">
    <citation type="journal article" date="1997" name="J. Bacteriol.">
        <title>Complete genome sequence of Methanobacterium thermoautotrophicum deltaH: functional analysis and comparative genomics.</title>
        <authorList>
            <person name="Smith D.R."/>
            <person name="Doucette-Stamm L.A."/>
            <person name="Deloughery C."/>
            <person name="Lee H.-M."/>
            <person name="Dubois J."/>
            <person name="Aldredge T."/>
            <person name="Bashirzadeh R."/>
            <person name="Blakely D."/>
            <person name="Cook R."/>
            <person name="Gilbert K."/>
            <person name="Harrison D."/>
            <person name="Hoang L."/>
            <person name="Keagle P."/>
            <person name="Lumm W."/>
            <person name="Pothier B."/>
            <person name="Qiu D."/>
            <person name="Spadafora R."/>
            <person name="Vicare R."/>
            <person name="Wang Y."/>
            <person name="Wierzbowski J."/>
            <person name="Gibson R."/>
            <person name="Jiwani N."/>
            <person name="Caruso A."/>
            <person name="Bush D."/>
            <person name="Safer H."/>
            <person name="Patwell D."/>
            <person name="Prabhakar S."/>
            <person name="McDougall S."/>
            <person name="Shimer G."/>
            <person name="Goyal A."/>
            <person name="Pietrovski S."/>
            <person name="Church G.M."/>
            <person name="Daniels C.J."/>
            <person name="Mao J.-I."/>
            <person name="Rice P."/>
            <person name="Noelling J."/>
            <person name="Reeve J.N."/>
        </authorList>
    </citation>
    <scope>NUCLEOTIDE SEQUENCE [LARGE SCALE GENOMIC DNA]</scope>
    <source>
        <strain>ATCC 29096 / DSM 1053 / JCM 10044 / NBRC 100330 / Delta H</strain>
    </source>
</reference>
<organism>
    <name type="scientific">Methanothermobacter thermautotrophicus (strain ATCC 29096 / DSM 1053 / JCM 10044 / NBRC 100330 / Delta H)</name>
    <name type="common">Methanobacterium thermoautotrophicum</name>
    <dbReference type="NCBI Taxonomy" id="187420"/>
    <lineage>
        <taxon>Archaea</taxon>
        <taxon>Methanobacteriati</taxon>
        <taxon>Methanobacteriota</taxon>
        <taxon>Methanomada group</taxon>
        <taxon>Methanobacteria</taxon>
        <taxon>Methanobacteriales</taxon>
        <taxon>Methanobacteriaceae</taxon>
        <taxon>Methanothermobacter</taxon>
    </lineage>
</organism>
<accession>O26244</accession>
<keyword id="KW-0456">Lyase</keyword>
<keyword id="KW-1185">Reference proteome</keyword>
<keyword id="KW-0704">Schiff base</keyword>
<name>MFNB_METTH</name>
<sequence length="236" mass="25092">MLLLISPINTEEALEAIEGGADIVDVKNPAEGSLGANFPWVIRRVREMTPEDMLVSATLGDVPYKPGTVSLAAMGALVSGADYIKVGLYGTRNYDEAVDVMKNVVRAVKDQSDAIVVAAGYADAHRVGAVEPMEIPRVAADSGADLAMLDTAVKDGKTLFDFMDMEKLESFVSAARDHGLKSALAGSVGREHLKPLHEIGCDVVGIRGAACVGGDRNTGRIHRDAVRELKELLDSF</sequence>
<evidence type="ECO:0000255" key="1">
    <source>
        <dbReference type="HAMAP-Rule" id="MF_00681"/>
    </source>
</evidence>
<comment type="function">
    <text evidence="1">Catalyzes the formation of 4-(hydroxymethyl)-2-furancarboxaldehyde phosphate (4-HFC-P) from two molecules of glyceraldehyde-3-P (GA-3-P).</text>
</comment>
<comment type="catalytic activity">
    <reaction evidence="1">
        <text>2 D-glyceraldehyde 3-phosphate = 4-(hydroxymethyl)-2-furancarboxaldehyde phosphate + phosphate + 2 H2O</text>
        <dbReference type="Rhea" id="RHEA:43536"/>
        <dbReference type="ChEBI" id="CHEBI:15377"/>
        <dbReference type="ChEBI" id="CHEBI:43474"/>
        <dbReference type="ChEBI" id="CHEBI:59776"/>
        <dbReference type="ChEBI" id="CHEBI:83407"/>
        <dbReference type="EC" id="4.2.3.153"/>
    </reaction>
</comment>
<comment type="pathway">
    <text evidence="1">Cofactor biosynthesis; methanofuran biosynthesis.</text>
</comment>
<comment type="similarity">
    <text evidence="1">Belongs to the MfnB family.</text>
</comment>